<sequence length="199" mass="21156">MAKVLVLYYSSWGHVEQMAKAVAEGARETGAEVALKRVPELVPDEVAKQFHYKLDQEAPIATVEELADYDAIIFGTPTRYGNMASQMKQFIDQTGGLWAKGALVGKVGSAFTSTASQHGGQETTLTSFHTVLFHHGMVVVGLPYSFAGQNGVEQVKGNSPYGATTIADGDGSRQPSEVELDGARFQGRHVAGIAAKLAG</sequence>
<protein>
    <recommendedName>
        <fullName evidence="1">NAD(P)H dehydrogenase (quinone)</fullName>
        <ecNumber evidence="1">1.6.5.2</ecNumber>
    </recommendedName>
    <alternativeName>
        <fullName>Flavoprotein WrbA</fullName>
    </alternativeName>
    <alternativeName>
        <fullName evidence="1">NAD(P)H:quinone oxidoreductase</fullName>
        <shortName evidence="1">NQO</shortName>
    </alternativeName>
</protein>
<accession>A9VY95</accession>
<reference key="1">
    <citation type="submission" date="2007-12" db="EMBL/GenBank/DDBJ databases">
        <title>Complete sequence of Methylobacterium extorquens PA1.</title>
        <authorList>
            <consortium name="US DOE Joint Genome Institute"/>
            <person name="Copeland A."/>
            <person name="Lucas S."/>
            <person name="Lapidus A."/>
            <person name="Barry K."/>
            <person name="Glavina del Rio T."/>
            <person name="Dalin E."/>
            <person name="Tice H."/>
            <person name="Pitluck S."/>
            <person name="Saunders E."/>
            <person name="Brettin T."/>
            <person name="Bruce D."/>
            <person name="Detter J.C."/>
            <person name="Han C."/>
            <person name="Schmutz J."/>
            <person name="Larimer F."/>
            <person name="Land M."/>
            <person name="Hauser L."/>
            <person name="Kyrpides N."/>
            <person name="Kim E."/>
            <person name="Marx C."/>
            <person name="Richardson P."/>
        </authorList>
    </citation>
    <scope>NUCLEOTIDE SEQUENCE [LARGE SCALE GENOMIC DNA]</scope>
    <source>
        <strain>PA1</strain>
    </source>
</reference>
<name>NQOR_METEP</name>
<proteinExistence type="inferred from homology"/>
<feature type="chain" id="PRO_1000200633" description="NAD(P)H dehydrogenase (quinone)">
    <location>
        <begin position="1"/>
        <end position="199"/>
    </location>
</feature>
<feature type="domain" description="Flavodoxin-like" evidence="1">
    <location>
        <begin position="4"/>
        <end position="190"/>
    </location>
</feature>
<feature type="binding site" evidence="1">
    <location>
        <begin position="10"/>
        <end position="15"/>
    </location>
    <ligand>
        <name>FMN</name>
        <dbReference type="ChEBI" id="CHEBI:58210"/>
    </ligand>
</feature>
<feature type="binding site" evidence="1">
    <location>
        <position position="12"/>
    </location>
    <ligand>
        <name>NAD(+)</name>
        <dbReference type="ChEBI" id="CHEBI:57540"/>
    </ligand>
</feature>
<feature type="binding site" evidence="1">
    <location>
        <begin position="78"/>
        <end position="80"/>
    </location>
    <ligand>
        <name>FMN</name>
        <dbReference type="ChEBI" id="CHEBI:58210"/>
    </ligand>
</feature>
<feature type="binding site" evidence="1">
    <location>
        <position position="98"/>
    </location>
    <ligand>
        <name>substrate</name>
    </ligand>
</feature>
<feature type="binding site" evidence="1">
    <location>
        <begin position="113"/>
        <end position="119"/>
    </location>
    <ligand>
        <name>FMN</name>
        <dbReference type="ChEBI" id="CHEBI:58210"/>
    </ligand>
</feature>
<feature type="binding site" evidence="1">
    <location>
        <position position="134"/>
    </location>
    <ligand>
        <name>FMN</name>
        <dbReference type="ChEBI" id="CHEBI:58210"/>
    </ligand>
</feature>
<keyword id="KW-0285">Flavoprotein</keyword>
<keyword id="KW-0288">FMN</keyword>
<keyword id="KW-0520">NAD</keyword>
<keyword id="KW-0521">NADP</keyword>
<keyword id="KW-0547">Nucleotide-binding</keyword>
<keyword id="KW-0560">Oxidoreductase</keyword>
<comment type="catalytic activity">
    <reaction evidence="1">
        <text>a quinone + NADH + H(+) = a quinol + NAD(+)</text>
        <dbReference type="Rhea" id="RHEA:46160"/>
        <dbReference type="ChEBI" id="CHEBI:15378"/>
        <dbReference type="ChEBI" id="CHEBI:24646"/>
        <dbReference type="ChEBI" id="CHEBI:57540"/>
        <dbReference type="ChEBI" id="CHEBI:57945"/>
        <dbReference type="ChEBI" id="CHEBI:132124"/>
        <dbReference type="EC" id="1.6.5.2"/>
    </reaction>
</comment>
<comment type="catalytic activity">
    <reaction evidence="1">
        <text>a quinone + NADPH + H(+) = a quinol + NADP(+)</text>
        <dbReference type="Rhea" id="RHEA:46164"/>
        <dbReference type="ChEBI" id="CHEBI:15378"/>
        <dbReference type="ChEBI" id="CHEBI:24646"/>
        <dbReference type="ChEBI" id="CHEBI:57783"/>
        <dbReference type="ChEBI" id="CHEBI:58349"/>
        <dbReference type="ChEBI" id="CHEBI:132124"/>
        <dbReference type="EC" id="1.6.5.2"/>
    </reaction>
</comment>
<comment type="cofactor">
    <cofactor evidence="1">
        <name>FMN</name>
        <dbReference type="ChEBI" id="CHEBI:58210"/>
    </cofactor>
    <text evidence="1">Binds 1 FMN per monomer.</text>
</comment>
<comment type="similarity">
    <text evidence="1">Belongs to the WrbA family.</text>
</comment>
<evidence type="ECO:0000255" key="1">
    <source>
        <dbReference type="HAMAP-Rule" id="MF_01017"/>
    </source>
</evidence>
<dbReference type="EC" id="1.6.5.2" evidence="1"/>
<dbReference type="EMBL" id="CP000908">
    <property type="protein sequence ID" value="ABY32649.1"/>
    <property type="molecule type" value="Genomic_DNA"/>
</dbReference>
<dbReference type="SMR" id="A9VY95"/>
<dbReference type="CAZy" id="AA6">
    <property type="family name" value="Auxiliary Activities 6"/>
</dbReference>
<dbReference type="KEGG" id="mex:Mext_4280"/>
<dbReference type="eggNOG" id="COG0655">
    <property type="taxonomic scope" value="Bacteria"/>
</dbReference>
<dbReference type="HOGENOM" id="CLU_051402_0_2_5"/>
<dbReference type="BioCyc" id="MEXT419610:MEXT_RS21500-MONOMER"/>
<dbReference type="GO" id="GO:0016020">
    <property type="term" value="C:membrane"/>
    <property type="evidence" value="ECO:0007669"/>
    <property type="project" value="TreeGrafter"/>
</dbReference>
<dbReference type="GO" id="GO:0050660">
    <property type="term" value="F:flavin adenine dinucleotide binding"/>
    <property type="evidence" value="ECO:0007669"/>
    <property type="project" value="UniProtKB-UniRule"/>
</dbReference>
<dbReference type="GO" id="GO:0010181">
    <property type="term" value="F:FMN binding"/>
    <property type="evidence" value="ECO:0007669"/>
    <property type="project" value="InterPro"/>
</dbReference>
<dbReference type="GO" id="GO:0051287">
    <property type="term" value="F:NAD binding"/>
    <property type="evidence" value="ECO:0007669"/>
    <property type="project" value="UniProtKB-UniRule"/>
</dbReference>
<dbReference type="GO" id="GO:0050136">
    <property type="term" value="F:NADH:ubiquinone reductase (non-electrogenic) activity"/>
    <property type="evidence" value="ECO:0007669"/>
    <property type="project" value="RHEA"/>
</dbReference>
<dbReference type="GO" id="GO:0050661">
    <property type="term" value="F:NADP binding"/>
    <property type="evidence" value="ECO:0007669"/>
    <property type="project" value="UniProtKB-UniRule"/>
</dbReference>
<dbReference type="GO" id="GO:0008753">
    <property type="term" value="F:NADPH dehydrogenase (quinone) activity"/>
    <property type="evidence" value="ECO:0007669"/>
    <property type="project" value="RHEA"/>
</dbReference>
<dbReference type="FunFam" id="3.40.50.360:FF:000001">
    <property type="entry name" value="NAD(P)H dehydrogenase (Quinone) FQR1-like"/>
    <property type="match status" value="1"/>
</dbReference>
<dbReference type="Gene3D" id="3.40.50.360">
    <property type="match status" value="1"/>
</dbReference>
<dbReference type="HAMAP" id="MF_01017">
    <property type="entry name" value="NQOR"/>
    <property type="match status" value="1"/>
</dbReference>
<dbReference type="InterPro" id="IPR008254">
    <property type="entry name" value="Flavodoxin/NO_synth"/>
</dbReference>
<dbReference type="InterPro" id="IPR029039">
    <property type="entry name" value="Flavoprotein-like_sf"/>
</dbReference>
<dbReference type="InterPro" id="IPR010089">
    <property type="entry name" value="Flavoprotein_WrbA-like"/>
</dbReference>
<dbReference type="InterPro" id="IPR005025">
    <property type="entry name" value="FMN_Rdtase-like_dom"/>
</dbReference>
<dbReference type="InterPro" id="IPR037513">
    <property type="entry name" value="NQO"/>
</dbReference>
<dbReference type="NCBIfam" id="TIGR01755">
    <property type="entry name" value="flav_wrbA"/>
    <property type="match status" value="1"/>
</dbReference>
<dbReference type="NCBIfam" id="NF002999">
    <property type="entry name" value="PRK03767.1"/>
    <property type="match status" value="1"/>
</dbReference>
<dbReference type="PANTHER" id="PTHR30546">
    <property type="entry name" value="FLAVODOXIN-RELATED PROTEIN WRBA-RELATED"/>
    <property type="match status" value="1"/>
</dbReference>
<dbReference type="PANTHER" id="PTHR30546:SF23">
    <property type="entry name" value="FLAVOPROTEIN-LIKE PROTEIN YCP4-RELATED"/>
    <property type="match status" value="1"/>
</dbReference>
<dbReference type="Pfam" id="PF03358">
    <property type="entry name" value="FMN_red"/>
    <property type="match status" value="1"/>
</dbReference>
<dbReference type="SUPFAM" id="SSF52218">
    <property type="entry name" value="Flavoproteins"/>
    <property type="match status" value="1"/>
</dbReference>
<dbReference type="PROSITE" id="PS50902">
    <property type="entry name" value="FLAVODOXIN_LIKE"/>
    <property type="match status" value="1"/>
</dbReference>
<gene>
    <name type="ordered locus">Mext_4280</name>
</gene>
<organism>
    <name type="scientific">Methylorubrum extorquens (strain PA1)</name>
    <name type="common">Methylobacterium extorquens</name>
    <dbReference type="NCBI Taxonomy" id="419610"/>
    <lineage>
        <taxon>Bacteria</taxon>
        <taxon>Pseudomonadati</taxon>
        <taxon>Pseudomonadota</taxon>
        <taxon>Alphaproteobacteria</taxon>
        <taxon>Hyphomicrobiales</taxon>
        <taxon>Methylobacteriaceae</taxon>
        <taxon>Methylorubrum</taxon>
    </lineage>
</organism>